<organism>
    <name type="scientific">Clavibacter michiganensis subsp. michiganensis (strain NCPPB 382)</name>
    <dbReference type="NCBI Taxonomy" id="443906"/>
    <lineage>
        <taxon>Bacteria</taxon>
        <taxon>Bacillati</taxon>
        <taxon>Actinomycetota</taxon>
        <taxon>Actinomycetes</taxon>
        <taxon>Micrococcales</taxon>
        <taxon>Microbacteriaceae</taxon>
        <taxon>Clavibacter</taxon>
    </lineage>
</organism>
<protein>
    <recommendedName>
        <fullName evidence="1">4-hydroxy-3-methylbut-2-en-1-yl diphosphate synthase (flavodoxin)</fullName>
        <ecNumber evidence="1">1.17.7.3</ecNumber>
    </recommendedName>
    <alternativeName>
        <fullName evidence="1">1-hydroxy-2-methyl-2-(E)-butenyl 4-diphosphate synthase</fullName>
    </alternativeName>
</protein>
<proteinExistence type="inferred from homology"/>
<gene>
    <name evidence="1" type="primary">ispG</name>
    <name type="ordered locus">CMM_2156</name>
</gene>
<keyword id="KW-0004">4Fe-4S</keyword>
<keyword id="KW-0408">Iron</keyword>
<keyword id="KW-0411">Iron-sulfur</keyword>
<keyword id="KW-0414">Isoprene biosynthesis</keyword>
<keyword id="KW-0479">Metal-binding</keyword>
<keyword id="KW-0560">Oxidoreductase</keyword>
<reference key="1">
    <citation type="journal article" date="2008" name="J. Bacteriol.">
        <title>The genome sequence of the tomato-pathogenic actinomycete Clavibacter michiganensis subsp. michiganensis NCPPB382 reveals a large island involved in pathogenicity.</title>
        <authorList>
            <person name="Gartemann K.-H."/>
            <person name="Abt B."/>
            <person name="Bekel T."/>
            <person name="Burger A."/>
            <person name="Engemann J."/>
            <person name="Fluegel M."/>
            <person name="Gaigalat L."/>
            <person name="Goesmann A."/>
            <person name="Graefen I."/>
            <person name="Kalinowski J."/>
            <person name="Kaup O."/>
            <person name="Kirchner O."/>
            <person name="Krause L."/>
            <person name="Linke B."/>
            <person name="McHardy A."/>
            <person name="Meyer F."/>
            <person name="Pohle S."/>
            <person name="Rueckert C."/>
            <person name="Schneiker S."/>
            <person name="Zellermann E.-M."/>
            <person name="Puehler A."/>
            <person name="Eichenlaub R."/>
            <person name="Kaiser O."/>
            <person name="Bartels D."/>
        </authorList>
    </citation>
    <scope>NUCLEOTIDE SEQUENCE [LARGE SCALE GENOMIC DNA]</scope>
    <source>
        <strain>NCPPB 382</strain>
    </source>
</reference>
<name>ISPG_CLAM3</name>
<dbReference type="EC" id="1.17.7.3" evidence="1"/>
<dbReference type="EMBL" id="AM711867">
    <property type="protein sequence ID" value="CAN02226.1"/>
    <property type="molecule type" value="Genomic_DNA"/>
</dbReference>
<dbReference type="SMR" id="A5CT01"/>
<dbReference type="KEGG" id="cmi:CMM_2156"/>
<dbReference type="eggNOG" id="COG0821">
    <property type="taxonomic scope" value="Bacteria"/>
</dbReference>
<dbReference type="HOGENOM" id="CLU_042258_0_0_11"/>
<dbReference type="UniPathway" id="UPA00056">
    <property type="reaction ID" value="UER00096"/>
</dbReference>
<dbReference type="Proteomes" id="UP000001564">
    <property type="component" value="Chromosome"/>
</dbReference>
<dbReference type="GO" id="GO:0051539">
    <property type="term" value="F:4 iron, 4 sulfur cluster binding"/>
    <property type="evidence" value="ECO:0007669"/>
    <property type="project" value="UniProtKB-UniRule"/>
</dbReference>
<dbReference type="GO" id="GO:0046429">
    <property type="term" value="F:4-hydroxy-3-methylbut-2-en-1-yl diphosphate synthase activity (ferredoxin)"/>
    <property type="evidence" value="ECO:0007669"/>
    <property type="project" value="UniProtKB-UniRule"/>
</dbReference>
<dbReference type="GO" id="GO:0141197">
    <property type="term" value="F:4-hydroxy-3-methylbut-2-enyl-diphosphate synthase activity (flavodoxin)"/>
    <property type="evidence" value="ECO:0007669"/>
    <property type="project" value="UniProtKB-EC"/>
</dbReference>
<dbReference type="GO" id="GO:0005506">
    <property type="term" value="F:iron ion binding"/>
    <property type="evidence" value="ECO:0007669"/>
    <property type="project" value="InterPro"/>
</dbReference>
<dbReference type="GO" id="GO:0019288">
    <property type="term" value="P:isopentenyl diphosphate biosynthetic process, methylerythritol 4-phosphate pathway"/>
    <property type="evidence" value="ECO:0007669"/>
    <property type="project" value="UniProtKB-UniRule"/>
</dbReference>
<dbReference type="GO" id="GO:0016114">
    <property type="term" value="P:terpenoid biosynthetic process"/>
    <property type="evidence" value="ECO:0007669"/>
    <property type="project" value="InterPro"/>
</dbReference>
<dbReference type="FunFam" id="3.20.20.20:FF:000001">
    <property type="entry name" value="4-hydroxy-3-methylbut-2-en-1-yl diphosphate synthase (flavodoxin)"/>
    <property type="match status" value="1"/>
</dbReference>
<dbReference type="Gene3D" id="3.20.20.20">
    <property type="entry name" value="Dihydropteroate synthase-like"/>
    <property type="match status" value="1"/>
</dbReference>
<dbReference type="Gene3D" id="3.30.413.10">
    <property type="entry name" value="Sulfite Reductase Hemoprotein, domain 1"/>
    <property type="match status" value="1"/>
</dbReference>
<dbReference type="HAMAP" id="MF_00159">
    <property type="entry name" value="IspG"/>
    <property type="match status" value="1"/>
</dbReference>
<dbReference type="InterPro" id="IPR011005">
    <property type="entry name" value="Dihydropteroate_synth-like_sf"/>
</dbReference>
<dbReference type="InterPro" id="IPR016425">
    <property type="entry name" value="IspG_bac"/>
</dbReference>
<dbReference type="InterPro" id="IPR004588">
    <property type="entry name" value="IspG_bac-typ"/>
</dbReference>
<dbReference type="InterPro" id="IPR045854">
    <property type="entry name" value="NO2/SO3_Rdtase_4Fe4S_sf"/>
</dbReference>
<dbReference type="NCBIfam" id="TIGR00612">
    <property type="entry name" value="ispG_gcpE"/>
    <property type="match status" value="1"/>
</dbReference>
<dbReference type="NCBIfam" id="NF001540">
    <property type="entry name" value="PRK00366.1"/>
    <property type="match status" value="1"/>
</dbReference>
<dbReference type="PANTHER" id="PTHR30454">
    <property type="entry name" value="4-HYDROXY-3-METHYLBUT-2-EN-1-YL DIPHOSPHATE SYNTHASE"/>
    <property type="match status" value="1"/>
</dbReference>
<dbReference type="PANTHER" id="PTHR30454:SF0">
    <property type="entry name" value="4-HYDROXY-3-METHYLBUT-2-EN-1-YL DIPHOSPHATE SYNTHASE (FERREDOXIN), CHLOROPLASTIC"/>
    <property type="match status" value="1"/>
</dbReference>
<dbReference type="Pfam" id="PF04551">
    <property type="entry name" value="GcpE"/>
    <property type="match status" value="1"/>
</dbReference>
<dbReference type="PIRSF" id="PIRSF004640">
    <property type="entry name" value="IspG"/>
    <property type="match status" value="1"/>
</dbReference>
<dbReference type="SUPFAM" id="SSF51717">
    <property type="entry name" value="Dihydropteroate synthetase-like"/>
    <property type="match status" value="1"/>
</dbReference>
<dbReference type="SUPFAM" id="SSF56014">
    <property type="entry name" value="Nitrite and sulphite reductase 4Fe-4S domain-like"/>
    <property type="match status" value="1"/>
</dbReference>
<comment type="function">
    <text evidence="1">Converts 2C-methyl-D-erythritol 2,4-cyclodiphosphate (ME-2,4cPP) into 1-hydroxy-2-methyl-2-(E)-butenyl 4-diphosphate.</text>
</comment>
<comment type="catalytic activity">
    <reaction evidence="1">
        <text>(2E)-4-hydroxy-3-methylbut-2-enyl diphosphate + oxidized [flavodoxin] + H2O + 2 H(+) = 2-C-methyl-D-erythritol 2,4-cyclic diphosphate + reduced [flavodoxin]</text>
        <dbReference type="Rhea" id="RHEA:43604"/>
        <dbReference type="Rhea" id="RHEA-COMP:10622"/>
        <dbReference type="Rhea" id="RHEA-COMP:10623"/>
        <dbReference type="ChEBI" id="CHEBI:15377"/>
        <dbReference type="ChEBI" id="CHEBI:15378"/>
        <dbReference type="ChEBI" id="CHEBI:57618"/>
        <dbReference type="ChEBI" id="CHEBI:58210"/>
        <dbReference type="ChEBI" id="CHEBI:58483"/>
        <dbReference type="ChEBI" id="CHEBI:128753"/>
        <dbReference type="EC" id="1.17.7.3"/>
    </reaction>
</comment>
<comment type="cofactor">
    <cofactor evidence="1">
        <name>[4Fe-4S] cluster</name>
        <dbReference type="ChEBI" id="CHEBI:49883"/>
    </cofactor>
    <text evidence="1">Binds 1 [4Fe-4S] cluster.</text>
</comment>
<comment type="pathway">
    <text evidence="1">Isoprenoid biosynthesis; isopentenyl diphosphate biosynthesis via DXP pathway; isopentenyl diphosphate from 1-deoxy-D-xylulose 5-phosphate: step 5/6.</text>
</comment>
<comment type="similarity">
    <text evidence="1">Belongs to the IspG family.</text>
</comment>
<evidence type="ECO:0000255" key="1">
    <source>
        <dbReference type="HAMAP-Rule" id="MF_00159"/>
    </source>
</evidence>
<accession>A5CT01</accession>
<sequence>MPAVNLGMPKVPEVLAPRRKTRQISVGKVKVGGNAQVSVQSMTTTQTTNINATLQQIAELTATGCDIVRVAVPHQDDADVLHILAKKSQIPIIADIHFQPRYVFTAIDAGVGAVRVNPGNIRKFDDQVGAIAKAAKAAGVSIRIGVNAGSLHPSLLQKYGKATPEALVESAVWEASLFEEHDFHDFKISVKHNDPVIMVKAYRLLAERGDWPLHLGVTEAGPAFQGTIKSATAFGILLSEGIGDTIRVSLSAPPAEEVKVGLQILQSLNLRERKLEIVSCPSCGRAQVDVYSLAEQVTEGLKHVNVPLRVAVMGCVVNGPGEAREAELGVASGNGRGQIFVKGEVIKTVPEAEIVQTLIEEANRLAAEMPAGSIGSPEILV</sequence>
<feature type="chain" id="PRO_1000076880" description="4-hydroxy-3-methylbut-2-en-1-yl diphosphate synthase (flavodoxin)">
    <location>
        <begin position="1"/>
        <end position="381"/>
    </location>
</feature>
<feature type="binding site" evidence="1">
    <location>
        <position position="280"/>
    </location>
    <ligand>
        <name>[4Fe-4S] cluster</name>
        <dbReference type="ChEBI" id="CHEBI:49883"/>
    </ligand>
</feature>
<feature type="binding site" evidence="1">
    <location>
        <position position="283"/>
    </location>
    <ligand>
        <name>[4Fe-4S] cluster</name>
        <dbReference type="ChEBI" id="CHEBI:49883"/>
    </ligand>
</feature>
<feature type="binding site" evidence="1">
    <location>
        <position position="315"/>
    </location>
    <ligand>
        <name>[4Fe-4S] cluster</name>
        <dbReference type="ChEBI" id="CHEBI:49883"/>
    </ligand>
</feature>
<feature type="binding site" evidence="1">
    <location>
        <position position="322"/>
    </location>
    <ligand>
        <name>[4Fe-4S] cluster</name>
        <dbReference type="ChEBI" id="CHEBI:49883"/>
    </ligand>
</feature>